<evidence type="ECO:0000255" key="1">
    <source>
        <dbReference type="HAMAP-Rule" id="MF_01445"/>
    </source>
</evidence>
<comment type="function">
    <text evidence="1">Required for the formation of a threonylcarbamoyl group on adenosine at position 37 (t(6)A37) in tRNAs that read codons beginning with adenine. Is involved in the transfer of the threonylcarbamoyl moiety of threonylcarbamoyl-AMP (TC-AMP) to the N6 group of A37, together with TsaE and TsaB. TsaD likely plays a direct catalytic role in this reaction.</text>
</comment>
<comment type="catalytic activity">
    <reaction evidence="1">
        <text>L-threonylcarbamoyladenylate + adenosine(37) in tRNA = N(6)-L-threonylcarbamoyladenosine(37) in tRNA + AMP + H(+)</text>
        <dbReference type="Rhea" id="RHEA:37059"/>
        <dbReference type="Rhea" id="RHEA-COMP:10162"/>
        <dbReference type="Rhea" id="RHEA-COMP:10163"/>
        <dbReference type="ChEBI" id="CHEBI:15378"/>
        <dbReference type="ChEBI" id="CHEBI:73682"/>
        <dbReference type="ChEBI" id="CHEBI:74411"/>
        <dbReference type="ChEBI" id="CHEBI:74418"/>
        <dbReference type="ChEBI" id="CHEBI:456215"/>
        <dbReference type="EC" id="2.3.1.234"/>
    </reaction>
</comment>
<comment type="cofactor">
    <cofactor evidence="1">
        <name>Fe(2+)</name>
        <dbReference type="ChEBI" id="CHEBI:29033"/>
    </cofactor>
    <text evidence="1">Binds 1 Fe(2+) ion per subunit.</text>
</comment>
<comment type="subcellular location">
    <subcellularLocation>
        <location evidence="1">Cytoplasm</location>
    </subcellularLocation>
</comment>
<comment type="similarity">
    <text evidence="1">Belongs to the KAE1 / TsaD family.</text>
</comment>
<reference key="1">
    <citation type="submission" date="2008-02" db="EMBL/GenBank/DDBJ databases">
        <title>Genome sequence of Ureaplasma parvum serovar 3.</title>
        <authorList>
            <person name="Methe B.A."/>
            <person name="Glass J."/>
            <person name="Waites K."/>
            <person name="Shrivastava S."/>
        </authorList>
    </citation>
    <scope>NUCLEOTIDE SEQUENCE [LARGE SCALE GENOMIC DNA]</scope>
    <source>
        <strain>ATCC 27815 / 27 / NCTC 11736</strain>
    </source>
</reference>
<keyword id="KW-0012">Acyltransferase</keyword>
<keyword id="KW-0963">Cytoplasm</keyword>
<keyword id="KW-0408">Iron</keyword>
<keyword id="KW-0479">Metal-binding</keyword>
<keyword id="KW-0808">Transferase</keyword>
<keyword id="KW-0819">tRNA processing</keyword>
<proteinExistence type="inferred from homology"/>
<accession>B1AJ51</accession>
<feature type="chain" id="PRO_1000087497" description="tRNA N6-adenosine threonylcarbamoyltransferase">
    <location>
        <begin position="1"/>
        <end position="320"/>
    </location>
</feature>
<feature type="binding site" evidence="1">
    <location>
        <position position="114"/>
    </location>
    <ligand>
        <name>Fe cation</name>
        <dbReference type="ChEBI" id="CHEBI:24875"/>
    </ligand>
</feature>
<feature type="binding site" evidence="1">
    <location>
        <position position="118"/>
    </location>
    <ligand>
        <name>Fe cation</name>
        <dbReference type="ChEBI" id="CHEBI:24875"/>
    </ligand>
</feature>
<feature type="binding site" evidence="1">
    <location>
        <begin position="136"/>
        <end position="140"/>
    </location>
    <ligand>
        <name>substrate</name>
    </ligand>
</feature>
<feature type="binding site" evidence="1">
    <location>
        <position position="169"/>
    </location>
    <ligand>
        <name>substrate</name>
    </ligand>
</feature>
<feature type="binding site" evidence="1">
    <location>
        <position position="182"/>
    </location>
    <ligand>
        <name>substrate</name>
    </ligand>
</feature>
<feature type="binding site" evidence="1">
    <location>
        <position position="186"/>
    </location>
    <ligand>
        <name>substrate</name>
    </ligand>
</feature>
<feature type="binding site" evidence="1">
    <location>
        <position position="273"/>
    </location>
    <ligand>
        <name>substrate</name>
    </ligand>
</feature>
<feature type="binding site" evidence="1">
    <location>
        <position position="297"/>
    </location>
    <ligand>
        <name>Fe cation</name>
        <dbReference type="ChEBI" id="CHEBI:24875"/>
    </ligand>
</feature>
<sequence>MNDNYLILSIESSCDETSLALFENNKLIAHKISSSASIQSLHGGVVPELASRYHEQNINHLFNEILNETKINPLTITHVAYTAMPGLPGCLHVGKVFAKQLAVLINAELVPINHLHAHVFSASINQNLTFPFLGLVVSGGESCIYLVNDYDEIKVLNQTHDDAIGECYDKIARVLGWKYPGGPIIDKNYQENLATLEFIKSQPAAKDFSFSGLKTAVINYIHNAKQKKISFDPVVVASSFQKFAINEIIKKIKYYLNLYKLNHLAIGGGVSANSLLRKKIQSLDVISYIPEMIYTGDNAAMIGAYAYALIKNHKKSILIK</sequence>
<gene>
    <name evidence="1" type="primary">tsaD</name>
    <name type="synonym">gcp</name>
    <name type="ordered locus">UPA3_0428</name>
</gene>
<protein>
    <recommendedName>
        <fullName evidence="1">tRNA N6-adenosine threonylcarbamoyltransferase</fullName>
        <ecNumber evidence="1">2.3.1.234</ecNumber>
    </recommendedName>
    <alternativeName>
        <fullName evidence="1">N6-L-threonylcarbamoyladenine synthase</fullName>
        <shortName evidence="1">t(6)A synthase</shortName>
    </alternativeName>
    <alternativeName>
        <fullName evidence="1">t(6)A37 threonylcarbamoyladenosine biosynthesis protein TsaD</fullName>
    </alternativeName>
    <alternativeName>
        <fullName evidence="1">tRNA threonylcarbamoyladenosine biosynthesis protein TsaD</fullName>
    </alternativeName>
</protein>
<dbReference type="EC" id="2.3.1.234" evidence="1"/>
<dbReference type="EMBL" id="CP000942">
    <property type="protein sequence ID" value="ACA33260.1"/>
    <property type="molecule type" value="Genomic_DNA"/>
</dbReference>
<dbReference type="RefSeq" id="WP_006689092.1">
    <property type="nucleotide sequence ID" value="NC_010503.1"/>
</dbReference>
<dbReference type="SMR" id="B1AJ51"/>
<dbReference type="GeneID" id="29672458"/>
<dbReference type="KEGG" id="upa:UPA3_0428"/>
<dbReference type="HOGENOM" id="CLU_023208_0_1_14"/>
<dbReference type="Proteomes" id="UP000002162">
    <property type="component" value="Chromosome"/>
</dbReference>
<dbReference type="GO" id="GO:0005737">
    <property type="term" value="C:cytoplasm"/>
    <property type="evidence" value="ECO:0007669"/>
    <property type="project" value="UniProtKB-SubCell"/>
</dbReference>
<dbReference type="GO" id="GO:0005506">
    <property type="term" value="F:iron ion binding"/>
    <property type="evidence" value="ECO:0007669"/>
    <property type="project" value="UniProtKB-UniRule"/>
</dbReference>
<dbReference type="GO" id="GO:0061711">
    <property type="term" value="F:N(6)-L-threonylcarbamoyladenine synthase activity"/>
    <property type="evidence" value="ECO:0007669"/>
    <property type="project" value="UniProtKB-EC"/>
</dbReference>
<dbReference type="GO" id="GO:0002949">
    <property type="term" value="P:tRNA threonylcarbamoyladenosine modification"/>
    <property type="evidence" value="ECO:0007669"/>
    <property type="project" value="UniProtKB-UniRule"/>
</dbReference>
<dbReference type="Gene3D" id="3.30.420.40">
    <property type="match status" value="2"/>
</dbReference>
<dbReference type="HAMAP" id="MF_01445">
    <property type="entry name" value="TsaD"/>
    <property type="match status" value="1"/>
</dbReference>
<dbReference type="InterPro" id="IPR043129">
    <property type="entry name" value="ATPase_NBD"/>
</dbReference>
<dbReference type="InterPro" id="IPR000905">
    <property type="entry name" value="Gcp-like_dom"/>
</dbReference>
<dbReference type="InterPro" id="IPR017861">
    <property type="entry name" value="KAE1/TsaD"/>
</dbReference>
<dbReference type="InterPro" id="IPR022450">
    <property type="entry name" value="TsaD"/>
</dbReference>
<dbReference type="NCBIfam" id="TIGR00329">
    <property type="entry name" value="gcp_kae1"/>
    <property type="match status" value="1"/>
</dbReference>
<dbReference type="NCBIfam" id="TIGR03723">
    <property type="entry name" value="T6A_TsaD_YgjD"/>
    <property type="match status" value="1"/>
</dbReference>
<dbReference type="PANTHER" id="PTHR11735">
    <property type="entry name" value="TRNA N6-ADENOSINE THREONYLCARBAMOYLTRANSFERASE"/>
    <property type="match status" value="1"/>
</dbReference>
<dbReference type="PANTHER" id="PTHR11735:SF6">
    <property type="entry name" value="TRNA N6-ADENOSINE THREONYLCARBAMOYLTRANSFERASE, MITOCHONDRIAL"/>
    <property type="match status" value="1"/>
</dbReference>
<dbReference type="Pfam" id="PF00814">
    <property type="entry name" value="TsaD"/>
    <property type="match status" value="1"/>
</dbReference>
<dbReference type="PRINTS" id="PR00789">
    <property type="entry name" value="OSIALOPTASE"/>
</dbReference>
<dbReference type="SUPFAM" id="SSF53067">
    <property type="entry name" value="Actin-like ATPase domain"/>
    <property type="match status" value="2"/>
</dbReference>
<organism>
    <name type="scientific">Ureaplasma parvum serovar 3 (strain ATCC 27815 / 27 / NCTC 11736)</name>
    <dbReference type="NCBI Taxonomy" id="505682"/>
    <lineage>
        <taxon>Bacteria</taxon>
        <taxon>Bacillati</taxon>
        <taxon>Mycoplasmatota</taxon>
        <taxon>Mycoplasmoidales</taxon>
        <taxon>Mycoplasmoidaceae</taxon>
        <taxon>Ureaplasma</taxon>
    </lineage>
</organism>
<name>TSAD_UREP2</name>